<name>UBIE_BURMA</name>
<accession>Q62MP4</accession>
<keyword id="KW-0474">Menaquinone biosynthesis</keyword>
<keyword id="KW-0489">Methyltransferase</keyword>
<keyword id="KW-1185">Reference proteome</keyword>
<keyword id="KW-0949">S-adenosyl-L-methionine</keyword>
<keyword id="KW-0808">Transferase</keyword>
<keyword id="KW-0831">Ubiquinone biosynthesis</keyword>
<reference key="1">
    <citation type="journal article" date="2004" name="Proc. Natl. Acad. Sci. U.S.A.">
        <title>Structural flexibility in the Burkholderia mallei genome.</title>
        <authorList>
            <person name="Nierman W.C."/>
            <person name="DeShazer D."/>
            <person name="Kim H.S."/>
            <person name="Tettelin H."/>
            <person name="Nelson K.E."/>
            <person name="Feldblyum T.V."/>
            <person name="Ulrich R.L."/>
            <person name="Ronning C.M."/>
            <person name="Brinkac L.M."/>
            <person name="Daugherty S.C."/>
            <person name="Davidsen T.D."/>
            <person name="DeBoy R.T."/>
            <person name="Dimitrov G."/>
            <person name="Dodson R.J."/>
            <person name="Durkin A.S."/>
            <person name="Gwinn M.L."/>
            <person name="Haft D.H."/>
            <person name="Khouri H.M."/>
            <person name="Kolonay J.F."/>
            <person name="Madupu R."/>
            <person name="Mohammoud Y."/>
            <person name="Nelson W.C."/>
            <person name="Radune D."/>
            <person name="Romero C.M."/>
            <person name="Sarria S."/>
            <person name="Selengut J."/>
            <person name="Shamblin C."/>
            <person name="Sullivan S.A."/>
            <person name="White O."/>
            <person name="Yu Y."/>
            <person name="Zafar N."/>
            <person name="Zhou L."/>
            <person name="Fraser C.M."/>
        </authorList>
    </citation>
    <scope>NUCLEOTIDE SEQUENCE [LARGE SCALE GENOMIC DNA]</scope>
    <source>
        <strain>ATCC 23344</strain>
    </source>
</reference>
<feature type="chain" id="PRO_0000193258" description="Ubiquinone/menaquinone biosynthesis C-methyltransferase UbiE">
    <location>
        <begin position="1"/>
        <end position="243"/>
    </location>
</feature>
<feature type="binding site" evidence="1">
    <location>
        <position position="69"/>
    </location>
    <ligand>
        <name>S-adenosyl-L-methionine</name>
        <dbReference type="ChEBI" id="CHEBI:59789"/>
    </ligand>
</feature>
<feature type="binding site" evidence="1">
    <location>
        <position position="90"/>
    </location>
    <ligand>
        <name>S-adenosyl-L-methionine</name>
        <dbReference type="ChEBI" id="CHEBI:59789"/>
    </ligand>
</feature>
<feature type="binding site" evidence="1">
    <location>
        <begin position="116"/>
        <end position="117"/>
    </location>
    <ligand>
        <name>S-adenosyl-L-methionine</name>
        <dbReference type="ChEBI" id="CHEBI:59789"/>
    </ligand>
</feature>
<protein>
    <recommendedName>
        <fullName evidence="1">Ubiquinone/menaquinone biosynthesis C-methyltransferase UbiE</fullName>
        <ecNumber evidence="1">2.1.1.163</ecNumber>
        <ecNumber evidence="1">2.1.1.201</ecNumber>
    </recommendedName>
    <alternativeName>
        <fullName evidence="1">2-methoxy-6-polyprenyl-1,4-benzoquinol methylase</fullName>
    </alternativeName>
    <alternativeName>
        <fullName evidence="1">Demethylmenaquinone methyltransferase</fullName>
    </alternativeName>
</protein>
<gene>
    <name evidence="1" type="primary">ubiE</name>
    <name type="ordered locus">BMA0186</name>
</gene>
<comment type="function">
    <text evidence="1">Methyltransferase required for the conversion of demethylmenaquinol (DMKH2) to menaquinol (MKH2) and the conversion of 2-polyprenyl-6-methoxy-1,4-benzoquinol (DDMQH2) to 2-polyprenyl-3-methyl-6-methoxy-1,4-benzoquinol (DMQH2).</text>
</comment>
<comment type="catalytic activity">
    <reaction evidence="1">
        <text>a 2-demethylmenaquinol + S-adenosyl-L-methionine = a menaquinol + S-adenosyl-L-homocysteine + H(+)</text>
        <dbReference type="Rhea" id="RHEA:42640"/>
        <dbReference type="Rhea" id="RHEA-COMP:9539"/>
        <dbReference type="Rhea" id="RHEA-COMP:9563"/>
        <dbReference type="ChEBI" id="CHEBI:15378"/>
        <dbReference type="ChEBI" id="CHEBI:18151"/>
        <dbReference type="ChEBI" id="CHEBI:55437"/>
        <dbReference type="ChEBI" id="CHEBI:57856"/>
        <dbReference type="ChEBI" id="CHEBI:59789"/>
        <dbReference type="EC" id="2.1.1.163"/>
    </reaction>
</comment>
<comment type="catalytic activity">
    <reaction evidence="1">
        <text>a 2-methoxy-6-(all-trans-polyprenyl)benzene-1,4-diol + S-adenosyl-L-methionine = a 5-methoxy-2-methyl-3-(all-trans-polyprenyl)benzene-1,4-diol + S-adenosyl-L-homocysteine + H(+)</text>
        <dbReference type="Rhea" id="RHEA:28286"/>
        <dbReference type="Rhea" id="RHEA-COMP:10858"/>
        <dbReference type="Rhea" id="RHEA-COMP:10859"/>
        <dbReference type="ChEBI" id="CHEBI:15378"/>
        <dbReference type="ChEBI" id="CHEBI:57856"/>
        <dbReference type="ChEBI" id="CHEBI:59789"/>
        <dbReference type="ChEBI" id="CHEBI:84166"/>
        <dbReference type="ChEBI" id="CHEBI:84167"/>
        <dbReference type="EC" id="2.1.1.201"/>
    </reaction>
</comment>
<comment type="pathway">
    <text evidence="1">Quinol/quinone metabolism; menaquinone biosynthesis; menaquinol from 1,4-dihydroxy-2-naphthoate: step 2/2.</text>
</comment>
<comment type="pathway">
    <text evidence="1">Cofactor biosynthesis; ubiquinone biosynthesis.</text>
</comment>
<comment type="similarity">
    <text evidence="1">Belongs to the class I-like SAM-binding methyltransferase superfamily. MenG/UbiE family.</text>
</comment>
<organism>
    <name type="scientific">Burkholderia mallei (strain ATCC 23344)</name>
    <dbReference type="NCBI Taxonomy" id="243160"/>
    <lineage>
        <taxon>Bacteria</taxon>
        <taxon>Pseudomonadati</taxon>
        <taxon>Pseudomonadota</taxon>
        <taxon>Betaproteobacteria</taxon>
        <taxon>Burkholderiales</taxon>
        <taxon>Burkholderiaceae</taxon>
        <taxon>Burkholderia</taxon>
        <taxon>pseudomallei group</taxon>
    </lineage>
</organism>
<evidence type="ECO:0000255" key="1">
    <source>
        <dbReference type="HAMAP-Rule" id="MF_01813"/>
    </source>
</evidence>
<sequence length="243" mass="26955">MSKTHFGFETVEENEKAKKVAGVFHSVASNYDLMNDLMSAGLHRAWKAFTIAQANVRPGGKVLDIAAGTGDLTKAFAKAAGPTGEVWHTDINESMLRVGRDRLLDKGVVTPSLLCDAEKLPFPDNYFDVVTVAFGLRNMTHKDSALAEMRRVAKPGGRVMVLEFSKVWEPLKKAYDVYSFKVLPWLGDKFAKDADSYRYLAESIRMHPDQETLKTMMEQAGLDAVKYYNLSGGVVALHVGTKY</sequence>
<proteinExistence type="inferred from homology"/>
<dbReference type="EC" id="2.1.1.163" evidence="1"/>
<dbReference type="EC" id="2.1.1.201" evidence="1"/>
<dbReference type="EMBL" id="CP000010">
    <property type="protein sequence ID" value="AAU49007.1"/>
    <property type="molecule type" value="Genomic_DNA"/>
</dbReference>
<dbReference type="RefSeq" id="WP_004189973.1">
    <property type="nucleotide sequence ID" value="NC_006348.1"/>
</dbReference>
<dbReference type="RefSeq" id="YP_102024.1">
    <property type="nucleotide sequence ID" value="NC_006348.1"/>
</dbReference>
<dbReference type="SMR" id="Q62MP4"/>
<dbReference type="GeneID" id="93059149"/>
<dbReference type="KEGG" id="bma:BMA0186"/>
<dbReference type="PATRIC" id="fig|243160.12.peg.184"/>
<dbReference type="eggNOG" id="COG2226">
    <property type="taxonomic scope" value="Bacteria"/>
</dbReference>
<dbReference type="HOGENOM" id="CLU_037990_0_0_4"/>
<dbReference type="UniPathway" id="UPA00079">
    <property type="reaction ID" value="UER00169"/>
</dbReference>
<dbReference type="UniPathway" id="UPA00232"/>
<dbReference type="Proteomes" id="UP000006693">
    <property type="component" value="Chromosome 1"/>
</dbReference>
<dbReference type="GO" id="GO:0008425">
    <property type="term" value="F:2-methoxy-6-polyprenyl-1,4-benzoquinol methyltransferase activity"/>
    <property type="evidence" value="ECO:0007669"/>
    <property type="project" value="UniProtKB-UniRule"/>
</dbReference>
<dbReference type="GO" id="GO:0043770">
    <property type="term" value="F:demethylmenaquinone methyltransferase activity"/>
    <property type="evidence" value="ECO:0007669"/>
    <property type="project" value="UniProtKB-UniRule"/>
</dbReference>
<dbReference type="GO" id="GO:0009060">
    <property type="term" value="P:aerobic respiration"/>
    <property type="evidence" value="ECO:0007669"/>
    <property type="project" value="UniProtKB-UniRule"/>
</dbReference>
<dbReference type="GO" id="GO:0009234">
    <property type="term" value="P:menaquinone biosynthetic process"/>
    <property type="evidence" value="ECO:0007669"/>
    <property type="project" value="UniProtKB-UniRule"/>
</dbReference>
<dbReference type="GO" id="GO:0032259">
    <property type="term" value="P:methylation"/>
    <property type="evidence" value="ECO:0007669"/>
    <property type="project" value="UniProtKB-KW"/>
</dbReference>
<dbReference type="CDD" id="cd02440">
    <property type="entry name" value="AdoMet_MTases"/>
    <property type="match status" value="1"/>
</dbReference>
<dbReference type="Gene3D" id="3.40.50.150">
    <property type="entry name" value="Vaccinia Virus protein VP39"/>
    <property type="match status" value="1"/>
</dbReference>
<dbReference type="HAMAP" id="MF_01813">
    <property type="entry name" value="MenG_UbiE_methyltr"/>
    <property type="match status" value="1"/>
</dbReference>
<dbReference type="InterPro" id="IPR029063">
    <property type="entry name" value="SAM-dependent_MTases_sf"/>
</dbReference>
<dbReference type="InterPro" id="IPR004033">
    <property type="entry name" value="UbiE/COQ5_MeTrFase"/>
</dbReference>
<dbReference type="InterPro" id="IPR023576">
    <property type="entry name" value="UbiE/COQ5_MeTrFase_CS"/>
</dbReference>
<dbReference type="NCBIfam" id="TIGR01934">
    <property type="entry name" value="MenG_MenH_UbiE"/>
    <property type="match status" value="1"/>
</dbReference>
<dbReference type="NCBIfam" id="NF001240">
    <property type="entry name" value="PRK00216.1-1"/>
    <property type="match status" value="1"/>
</dbReference>
<dbReference type="NCBIfam" id="NF001244">
    <property type="entry name" value="PRK00216.1-5"/>
    <property type="match status" value="1"/>
</dbReference>
<dbReference type="PANTHER" id="PTHR43591:SF24">
    <property type="entry name" value="2-METHOXY-6-POLYPRENYL-1,4-BENZOQUINOL METHYLASE, MITOCHONDRIAL"/>
    <property type="match status" value="1"/>
</dbReference>
<dbReference type="PANTHER" id="PTHR43591">
    <property type="entry name" value="METHYLTRANSFERASE"/>
    <property type="match status" value="1"/>
</dbReference>
<dbReference type="Pfam" id="PF01209">
    <property type="entry name" value="Ubie_methyltran"/>
    <property type="match status" value="1"/>
</dbReference>
<dbReference type="SUPFAM" id="SSF53335">
    <property type="entry name" value="S-adenosyl-L-methionine-dependent methyltransferases"/>
    <property type="match status" value="1"/>
</dbReference>
<dbReference type="PROSITE" id="PS51608">
    <property type="entry name" value="SAM_MT_UBIE"/>
    <property type="match status" value="1"/>
</dbReference>
<dbReference type="PROSITE" id="PS01183">
    <property type="entry name" value="UBIE_1"/>
    <property type="match status" value="1"/>
</dbReference>